<name>DIV_ANTMA</name>
<keyword id="KW-0217">Developmental protein</keyword>
<keyword id="KW-0238">DNA-binding</keyword>
<keyword id="KW-0539">Nucleus</keyword>
<keyword id="KW-0804">Transcription</keyword>
<keyword id="KW-0805">Transcription regulation</keyword>
<sequence length="307" mass="34429">MEILAPSSYFSSSSWFLEESRSTTRWTAAENKAFENALAVFDENTPNRWERVAERVPGKTVGDVMRQYKELEDDVSSIEAGFVPVPGYSTSSPFTLEWGSGHGFDGFKQSYGTGGRKSSSGRPSEQERKKGVPWTEEEHKLFLMGLKKYGKGDWRNISRNFVITRTPTQVASHAQKYFIRQLSGGKDKRRASIHDITTVNLSDNQTPSPDNKKPPSSPDHSMAQQQTSSTSIHKLPFQWDQTSNETIMGFASSGHHGNMFQSNPFGMNSYGFKMQGQQMQRGGFCDTYLGSQNMAFQMQSGLHFPNA</sequence>
<feature type="chain" id="PRO_0000419440" description="Transcription factor DIVARICATA">
    <location>
        <begin position="1"/>
        <end position="307"/>
    </location>
</feature>
<feature type="domain" description="SANT" evidence="1">
    <location>
        <begin position="21"/>
        <end position="74"/>
    </location>
</feature>
<feature type="domain" description="HTH myb-type" evidence="2">
    <location>
        <begin position="126"/>
        <end position="182"/>
    </location>
</feature>
<feature type="DNA-binding region" description="H-T-H motif" evidence="2">
    <location>
        <begin position="154"/>
        <end position="178"/>
    </location>
</feature>
<feature type="region of interest" description="Disordered" evidence="3">
    <location>
        <begin position="109"/>
        <end position="133"/>
    </location>
</feature>
<feature type="region of interest" description="Disordered" evidence="3">
    <location>
        <begin position="196"/>
        <end position="231"/>
    </location>
</feature>
<feature type="compositionally biased region" description="Basic and acidic residues" evidence="3">
    <location>
        <begin position="124"/>
        <end position="133"/>
    </location>
</feature>
<feature type="compositionally biased region" description="Polar residues" evidence="3">
    <location>
        <begin position="196"/>
        <end position="206"/>
    </location>
</feature>
<feature type="compositionally biased region" description="Polar residues" evidence="3">
    <location>
        <begin position="222"/>
        <end position="231"/>
    </location>
</feature>
<comment type="function">
    <text evidence="4 5">Involved in the dorsovental asymmetry of flowers. Promotes ventral identity.</text>
</comment>
<comment type="subcellular location">
    <subcellularLocation>
        <location evidence="1 2">Nucleus</location>
    </subcellularLocation>
</comment>
<comment type="developmental stage">
    <text evidence="4">Detected in the apical inflorescence meristem, in bract primordia arising in its periphery and in floral meristems produced in the axils of bracts (stages 0-3). From stage 3 to stage 8, detected in all floral organs irrespective of their dorsoventral positions. From stage 9, barely detectable in bracts, sepals, and stamens. In the corolla, however, expression was maintained and enhanced in some regions. Within ventral and lateral petals at stage 9, asymmetric pattern of expression with high levels of transcripts in the inner epidermis of the furrow and very reduced levels in the remaining cell layers. In the dorsal petals, from stage 9 onward, detected but with a more even distribution across cell layers than in the ventral petal.</text>
</comment>
<comment type="disruption phenotype">
    <text evidence="4">The petals are fused at the base, forming a tube that ends in the lobes.</text>
</comment>
<gene>
    <name type="primary">DIVARICATA</name>
</gene>
<dbReference type="EMBL" id="AY077453">
    <property type="protein sequence ID" value="AAL78741.1"/>
    <property type="molecule type" value="Genomic_DNA"/>
</dbReference>
<dbReference type="GO" id="GO:0005634">
    <property type="term" value="C:nucleus"/>
    <property type="evidence" value="ECO:0007669"/>
    <property type="project" value="UniProtKB-SubCell"/>
</dbReference>
<dbReference type="GO" id="GO:0003677">
    <property type="term" value="F:DNA binding"/>
    <property type="evidence" value="ECO:0007669"/>
    <property type="project" value="UniProtKB-KW"/>
</dbReference>
<dbReference type="GO" id="GO:0048262">
    <property type="term" value="P:determination of dorsal/ventral asymmetry"/>
    <property type="evidence" value="ECO:0000315"/>
    <property type="project" value="UniProtKB"/>
</dbReference>
<dbReference type="GO" id="GO:0009908">
    <property type="term" value="P:flower development"/>
    <property type="evidence" value="ECO:0000315"/>
    <property type="project" value="UniProtKB"/>
</dbReference>
<dbReference type="CDD" id="cd00167">
    <property type="entry name" value="SANT"/>
    <property type="match status" value="2"/>
</dbReference>
<dbReference type="FunFam" id="1.10.10.60:FF:000009">
    <property type="entry name" value="transcription factor MYB1R1"/>
    <property type="match status" value="1"/>
</dbReference>
<dbReference type="FunFam" id="1.10.10.60:FF:000154">
    <property type="entry name" value="Transcription factor SRM1"/>
    <property type="match status" value="1"/>
</dbReference>
<dbReference type="Gene3D" id="1.10.10.60">
    <property type="entry name" value="Homeodomain-like"/>
    <property type="match status" value="2"/>
</dbReference>
<dbReference type="InterPro" id="IPR009057">
    <property type="entry name" value="Homeodomain-like_sf"/>
</dbReference>
<dbReference type="InterPro" id="IPR017930">
    <property type="entry name" value="Myb_dom"/>
</dbReference>
<dbReference type="InterPro" id="IPR006447">
    <property type="entry name" value="Myb_dom_plants"/>
</dbReference>
<dbReference type="InterPro" id="IPR001005">
    <property type="entry name" value="SANT/Myb"/>
</dbReference>
<dbReference type="InterPro" id="IPR017884">
    <property type="entry name" value="SANT_dom"/>
</dbReference>
<dbReference type="NCBIfam" id="TIGR01557">
    <property type="entry name" value="myb_SHAQKYF"/>
    <property type="match status" value="1"/>
</dbReference>
<dbReference type="PANTHER" id="PTHR44042">
    <property type="entry name" value="DUPLICATED HOMEODOMAIN-LIKE SUPERFAMILY PROTEIN-RELATED"/>
    <property type="match status" value="1"/>
</dbReference>
<dbReference type="PANTHER" id="PTHR44042:SF41">
    <property type="entry name" value="DUPLICATED HOMEODOMAIN-LIKE SUPERFAMILY PROTEIN-RELATED"/>
    <property type="match status" value="1"/>
</dbReference>
<dbReference type="Pfam" id="PF00249">
    <property type="entry name" value="Myb_DNA-binding"/>
    <property type="match status" value="1"/>
</dbReference>
<dbReference type="SMART" id="SM00717">
    <property type="entry name" value="SANT"/>
    <property type="match status" value="2"/>
</dbReference>
<dbReference type="SUPFAM" id="SSF46689">
    <property type="entry name" value="Homeodomain-like"/>
    <property type="match status" value="2"/>
</dbReference>
<dbReference type="PROSITE" id="PS51294">
    <property type="entry name" value="HTH_MYB"/>
    <property type="match status" value="1"/>
</dbReference>
<dbReference type="PROSITE" id="PS51293">
    <property type="entry name" value="SANT"/>
    <property type="match status" value="1"/>
</dbReference>
<proteinExistence type="evidence at transcript level"/>
<evidence type="ECO:0000255" key="1">
    <source>
        <dbReference type="PROSITE-ProRule" id="PRU00624"/>
    </source>
</evidence>
<evidence type="ECO:0000255" key="2">
    <source>
        <dbReference type="PROSITE-ProRule" id="PRU00625"/>
    </source>
</evidence>
<evidence type="ECO:0000256" key="3">
    <source>
        <dbReference type="SAM" id="MobiDB-lite"/>
    </source>
</evidence>
<evidence type="ECO:0000269" key="4">
    <source>
    </source>
</evidence>
<evidence type="ECO:0000269" key="5">
    <source>
    </source>
</evidence>
<organism>
    <name type="scientific">Antirrhinum majus</name>
    <name type="common">Garden snapdragon</name>
    <dbReference type="NCBI Taxonomy" id="4151"/>
    <lineage>
        <taxon>Eukaryota</taxon>
        <taxon>Viridiplantae</taxon>
        <taxon>Streptophyta</taxon>
        <taxon>Embryophyta</taxon>
        <taxon>Tracheophyta</taxon>
        <taxon>Spermatophyta</taxon>
        <taxon>Magnoliopsida</taxon>
        <taxon>eudicotyledons</taxon>
        <taxon>Gunneridae</taxon>
        <taxon>Pentapetalae</taxon>
        <taxon>asterids</taxon>
        <taxon>lamiids</taxon>
        <taxon>Lamiales</taxon>
        <taxon>Plantaginaceae</taxon>
        <taxon>Antirrhineae</taxon>
        <taxon>Antirrhinum</taxon>
    </lineage>
</organism>
<reference key="1">
    <citation type="journal article" date="2002" name="Genes Dev.">
        <title>Role of DIVARICATA in the control of dorsoventral asymmetry in Antirrhinum flowers.</title>
        <authorList>
            <person name="Galego L."/>
            <person name="Almeida J."/>
        </authorList>
    </citation>
    <scope>NUCLEOTIDE SEQUENCE [GENOMIC DNA]</scope>
    <scope>FUNCTION</scope>
    <scope>DISRUPTION PHENOTYPE</scope>
    <scope>DEVELOPMENTAL STAGE</scope>
</reference>
<reference key="2">
    <citation type="journal article" date="1997" name="Development">
        <title>Genetic control of flower shape in Antirrhinum majus.</title>
        <authorList>
            <person name="Almeida J."/>
            <person name="Rocheta M."/>
            <person name="Galego L."/>
        </authorList>
    </citation>
    <scope>FUNCTION</scope>
</reference>
<accession>Q8S9H7</accession>
<protein>
    <recommendedName>
        <fullName>Transcription factor DIVARICATA</fullName>
    </recommendedName>
</protein>